<feature type="chain" id="PRO_1000090700" description="Ribosome-recycling factor">
    <location>
        <begin position="1"/>
        <end position="185"/>
    </location>
</feature>
<name>RRF_ACTP7</name>
<organism>
    <name type="scientific">Actinobacillus pleuropneumoniae serotype 7 (strain AP76)</name>
    <dbReference type="NCBI Taxonomy" id="537457"/>
    <lineage>
        <taxon>Bacteria</taxon>
        <taxon>Pseudomonadati</taxon>
        <taxon>Pseudomonadota</taxon>
        <taxon>Gammaproteobacteria</taxon>
        <taxon>Pasteurellales</taxon>
        <taxon>Pasteurellaceae</taxon>
        <taxon>Actinobacillus</taxon>
    </lineage>
</organism>
<gene>
    <name evidence="1" type="primary">frr</name>
    <name type="ordered locus">APP7_0614</name>
</gene>
<sequence>MINEIKKDTQDRMEKSLEALKSHISKIRTGRAQPSLLDGIQVEYYGSATPLRQLANVVAEDARTLAVNVFDRSLISAVEKAILTSDLGLNPSSAGATIRVPLPPLTEERRRDLIKIVKGEGEQGKIAIRNVRRDANDQIKALLKDKEISEDEERKAQDEIQKITDGYVKKVDEVLAAKEKELLDF</sequence>
<accession>B3GXB4</accession>
<keyword id="KW-0963">Cytoplasm</keyword>
<keyword id="KW-0648">Protein biosynthesis</keyword>
<evidence type="ECO:0000255" key="1">
    <source>
        <dbReference type="HAMAP-Rule" id="MF_00040"/>
    </source>
</evidence>
<dbReference type="EMBL" id="CP001091">
    <property type="protein sequence ID" value="ACE61266.1"/>
    <property type="molecule type" value="Genomic_DNA"/>
</dbReference>
<dbReference type="RefSeq" id="WP_005596791.1">
    <property type="nucleotide sequence ID" value="NC_010939.1"/>
</dbReference>
<dbReference type="SMR" id="B3GXB4"/>
<dbReference type="GeneID" id="48598758"/>
<dbReference type="KEGG" id="apa:APP7_0614"/>
<dbReference type="HOGENOM" id="CLU_073981_2_0_6"/>
<dbReference type="Proteomes" id="UP000001226">
    <property type="component" value="Chromosome"/>
</dbReference>
<dbReference type="GO" id="GO:0005829">
    <property type="term" value="C:cytosol"/>
    <property type="evidence" value="ECO:0007669"/>
    <property type="project" value="GOC"/>
</dbReference>
<dbReference type="GO" id="GO:0043023">
    <property type="term" value="F:ribosomal large subunit binding"/>
    <property type="evidence" value="ECO:0007669"/>
    <property type="project" value="TreeGrafter"/>
</dbReference>
<dbReference type="GO" id="GO:0002184">
    <property type="term" value="P:cytoplasmic translational termination"/>
    <property type="evidence" value="ECO:0007669"/>
    <property type="project" value="TreeGrafter"/>
</dbReference>
<dbReference type="CDD" id="cd00520">
    <property type="entry name" value="RRF"/>
    <property type="match status" value="1"/>
</dbReference>
<dbReference type="FunFam" id="1.10.132.20:FF:000001">
    <property type="entry name" value="Ribosome-recycling factor"/>
    <property type="match status" value="1"/>
</dbReference>
<dbReference type="FunFam" id="3.30.1360.40:FF:000001">
    <property type="entry name" value="Ribosome-recycling factor"/>
    <property type="match status" value="1"/>
</dbReference>
<dbReference type="Gene3D" id="3.30.1360.40">
    <property type="match status" value="1"/>
</dbReference>
<dbReference type="Gene3D" id="1.10.132.20">
    <property type="entry name" value="Ribosome-recycling factor"/>
    <property type="match status" value="1"/>
</dbReference>
<dbReference type="HAMAP" id="MF_00040">
    <property type="entry name" value="RRF"/>
    <property type="match status" value="1"/>
</dbReference>
<dbReference type="InterPro" id="IPR002661">
    <property type="entry name" value="Ribosome_recyc_fac"/>
</dbReference>
<dbReference type="InterPro" id="IPR023584">
    <property type="entry name" value="Ribosome_recyc_fac_dom"/>
</dbReference>
<dbReference type="InterPro" id="IPR036191">
    <property type="entry name" value="RRF_sf"/>
</dbReference>
<dbReference type="NCBIfam" id="TIGR00496">
    <property type="entry name" value="frr"/>
    <property type="match status" value="1"/>
</dbReference>
<dbReference type="PANTHER" id="PTHR20982:SF3">
    <property type="entry name" value="MITOCHONDRIAL RIBOSOME RECYCLING FACTOR PSEUDO 1"/>
    <property type="match status" value="1"/>
</dbReference>
<dbReference type="PANTHER" id="PTHR20982">
    <property type="entry name" value="RIBOSOME RECYCLING FACTOR"/>
    <property type="match status" value="1"/>
</dbReference>
<dbReference type="Pfam" id="PF01765">
    <property type="entry name" value="RRF"/>
    <property type="match status" value="1"/>
</dbReference>
<dbReference type="SUPFAM" id="SSF55194">
    <property type="entry name" value="Ribosome recycling factor, RRF"/>
    <property type="match status" value="1"/>
</dbReference>
<comment type="function">
    <text evidence="1">Responsible for the release of ribosomes from messenger RNA at the termination of protein biosynthesis. May increase the efficiency of translation by recycling ribosomes from one round of translation to another.</text>
</comment>
<comment type="subcellular location">
    <subcellularLocation>
        <location evidence="1">Cytoplasm</location>
    </subcellularLocation>
</comment>
<comment type="similarity">
    <text evidence="1">Belongs to the RRF family.</text>
</comment>
<reference key="1">
    <citation type="submission" date="2008-06" db="EMBL/GenBank/DDBJ databases">
        <title>Genome and proteome analysis of A. pleuropneumoniae serotype 7.</title>
        <authorList>
            <person name="Linke B."/>
            <person name="Buettner F."/>
            <person name="Martinez-Arias R."/>
            <person name="Goesmann A."/>
            <person name="Baltes N."/>
            <person name="Tegetmeyer H."/>
            <person name="Singh M."/>
            <person name="Gerlach G.F."/>
        </authorList>
    </citation>
    <scope>NUCLEOTIDE SEQUENCE [LARGE SCALE GENOMIC DNA]</scope>
    <source>
        <strain>AP76</strain>
    </source>
</reference>
<protein>
    <recommendedName>
        <fullName evidence="1">Ribosome-recycling factor</fullName>
        <shortName evidence="1">RRF</shortName>
    </recommendedName>
    <alternativeName>
        <fullName evidence="1">Ribosome-releasing factor</fullName>
    </alternativeName>
</protein>
<proteinExistence type="inferred from homology"/>